<reference key="1">
    <citation type="journal article" date="2002" name="Proc. Natl. Acad. Sci. U.S.A.">
        <title>Complete genome sequence and comparative genomic analysis of an emerging human pathogen, serotype V Streptococcus agalactiae.</title>
        <authorList>
            <person name="Tettelin H."/>
            <person name="Masignani V."/>
            <person name="Cieslewicz M.J."/>
            <person name="Eisen J.A."/>
            <person name="Peterson S.N."/>
            <person name="Wessels M.R."/>
            <person name="Paulsen I.T."/>
            <person name="Nelson K.E."/>
            <person name="Margarit I."/>
            <person name="Read T.D."/>
            <person name="Madoff L.C."/>
            <person name="Wolf A.M."/>
            <person name="Beanan M.J."/>
            <person name="Brinkac L.M."/>
            <person name="Daugherty S.C."/>
            <person name="DeBoy R.T."/>
            <person name="Durkin A.S."/>
            <person name="Kolonay J.F."/>
            <person name="Madupu R."/>
            <person name="Lewis M.R."/>
            <person name="Radune D."/>
            <person name="Fedorova N.B."/>
            <person name="Scanlan D."/>
            <person name="Khouri H.M."/>
            <person name="Mulligan S."/>
            <person name="Carty H.A."/>
            <person name="Cline R.T."/>
            <person name="Van Aken S.E."/>
            <person name="Gill J."/>
            <person name="Scarselli M."/>
            <person name="Mora M."/>
            <person name="Iacobini E.T."/>
            <person name="Brettoni C."/>
            <person name="Galli G."/>
            <person name="Mariani M."/>
            <person name="Vegni F."/>
            <person name="Maione D."/>
            <person name="Rinaudo D."/>
            <person name="Rappuoli R."/>
            <person name="Telford J.L."/>
            <person name="Kasper D.L."/>
            <person name="Grandi G."/>
            <person name="Fraser C.M."/>
        </authorList>
    </citation>
    <scope>NUCLEOTIDE SEQUENCE [LARGE SCALE GENOMIC DNA]</scope>
    <source>
        <strain>ATCC BAA-611 / 2603 V/R</strain>
    </source>
</reference>
<name>SSB1_STRA5</name>
<dbReference type="EMBL" id="AE009948">
    <property type="protein sequence ID" value="AAN00576.1"/>
    <property type="molecule type" value="Genomic_DNA"/>
</dbReference>
<dbReference type="RefSeq" id="NP_688703.1">
    <property type="nucleotide sequence ID" value="NC_004116.1"/>
</dbReference>
<dbReference type="RefSeq" id="WP_000609585.1">
    <property type="nucleotide sequence ID" value="NC_004116.1"/>
</dbReference>
<dbReference type="SMR" id="P66851"/>
<dbReference type="STRING" id="208435.SAG1713"/>
<dbReference type="KEGG" id="sag:SAG1713"/>
<dbReference type="PATRIC" id="fig|208435.3.peg.1721"/>
<dbReference type="HOGENOM" id="CLU_078758_6_2_9"/>
<dbReference type="OrthoDB" id="9809878at2"/>
<dbReference type="Proteomes" id="UP000000821">
    <property type="component" value="Chromosome"/>
</dbReference>
<dbReference type="GO" id="GO:0009295">
    <property type="term" value="C:nucleoid"/>
    <property type="evidence" value="ECO:0007669"/>
    <property type="project" value="TreeGrafter"/>
</dbReference>
<dbReference type="GO" id="GO:0003697">
    <property type="term" value="F:single-stranded DNA binding"/>
    <property type="evidence" value="ECO:0007669"/>
    <property type="project" value="UniProtKB-UniRule"/>
</dbReference>
<dbReference type="GO" id="GO:0006310">
    <property type="term" value="P:DNA recombination"/>
    <property type="evidence" value="ECO:0007669"/>
    <property type="project" value="UniProtKB-UniRule"/>
</dbReference>
<dbReference type="GO" id="GO:0006281">
    <property type="term" value="P:DNA repair"/>
    <property type="evidence" value="ECO:0007669"/>
    <property type="project" value="UniProtKB-UniRule"/>
</dbReference>
<dbReference type="GO" id="GO:0006260">
    <property type="term" value="P:DNA replication"/>
    <property type="evidence" value="ECO:0007669"/>
    <property type="project" value="UniProtKB-UniRule"/>
</dbReference>
<dbReference type="CDD" id="cd04496">
    <property type="entry name" value="SSB_OBF"/>
    <property type="match status" value="1"/>
</dbReference>
<dbReference type="FunFam" id="2.40.50.140:FF:000084">
    <property type="entry name" value="Single-stranded DNA-binding protein"/>
    <property type="match status" value="1"/>
</dbReference>
<dbReference type="Gene3D" id="2.40.50.140">
    <property type="entry name" value="Nucleic acid-binding proteins"/>
    <property type="match status" value="1"/>
</dbReference>
<dbReference type="HAMAP" id="MF_00984">
    <property type="entry name" value="SSB"/>
    <property type="match status" value="1"/>
</dbReference>
<dbReference type="InterPro" id="IPR012340">
    <property type="entry name" value="NA-bd_OB-fold"/>
</dbReference>
<dbReference type="InterPro" id="IPR000424">
    <property type="entry name" value="Primosome_PriB/ssb"/>
</dbReference>
<dbReference type="InterPro" id="IPR011344">
    <property type="entry name" value="ssDNA-bd"/>
</dbReference>
<dbReference type="NCBIfam" id="NF005580">
    <property type="entry name" value="PRK07275.1"/>
    <property type="match status" value="1"/>
</dbReference>
<dbReference type="NCBIfam" id="TIGR00621">
    <property type="entry name" value="ssb"/>
    <property type="match status" value="1"/>
</dbReference>
<dbReference type="PANTHER" id="PTHR10302">
    <property type="entry name" value="SINGLE-STRANDED DNA-BINDING PROTEIN"/>
    <property type="match status" value="1"/>
</dbReference>
<dbReference type="PANTHER" id="PTHR10302:SF27">
    <property type="entry name" value="SINGLE-STRANDED DNA-BINDING PROTEIN"/>
    <property type="match status" value="1"/>
</dbReference>
<dbReference type="Pfam" id="PF00436">
    <property type="entry name" value="SSB"/>
    <property type="match status" value="1"/>
</dbReference>
<dbReference type="PIRSF" id="PIRSF002070">
    <property type="entry name" value="SSB"/>
    <property type="match status" value="1"/>
</dbReference>
<dbReference type="SUPFAM" id="SSF50249">
    <property type="entry name" value="Nucleic acid-binding proteins"/>
    <property type="match status" value="1"/>
</dbReference>
<dbReference type="PROSITE" id="PS50935">
    <property type="entry name" value="SSB"/>
    <property type="match status" value="1"/>
</dbReference>
<comment type="function">
    <text evidence="1">Plays an important role in DNA replication, recombination and repair. Binds to ssDNA and to an array of partner proteins to recruit them to their sites of action during DNA metabolism.</text>
</comment>
<comment type="subunit">
    <text evidence="1">Homotetramer.</text>
</comment>
<sequence length="163" mass="18166">MINNVVLVGRMTRDAELRYTPSNQAVATFSLAVNRNFKNQSGEREADFINCVIWRQQAENLANWAKKGALVGITGRIQTRNYENQQGQRVYVTEVVAESFQLLESRATREGGSPNSYNNGGYNNAPSNNSYSASSQQTPNFSRDESPFGNSNPMDISDDDLPF</sequence>
<accession>P66851</accession>
<accession>Q8DXY2</accession>
<accession>Q8E3K1</accession>
<evidence type="ECO:0000255" key="1">
    <source>
        <dbReference type="HAMAP-Rule" id="MF_00984"/>
    </source>
</evidence>
<evidence type="ECO:0000256" key="2">
    <source>
        <dbReference type="SAM" id="MobiDB-lite"/>
    </source>
</evidence>
<protein>
    <recommendedName>
        <fullName evidence="1">Single-stranded DNA-binding protein 1</fullName>
        <shortName evidence="1">SSB 1</shortName>
    </recommendedName>
</protein>
<keyword id="KW-0227">DNA damage</keyword>
<keyword id="KW-0233">DNA recombination</keyword>
<keyword id="KW-0234">DNA repair</keyword>
<keyword id="KW-0235">DNA replication</keyword>
<keyword id="KW-0238">DNA-binding</keyword>
<keyword id="KW-1185">Reference proteome</keyword>
<proteinExistence type="inferred from homology"/>
<gene>
    <name type="primary">ssb1</name>
    <name type="ordered locus">SAG1713</name>
</gene>
<feature type="chain" id="PRO_0000096108" description="Single-stranded DNA-binding protein 1">
    <location>
        <begin position="1"/>
        <end position="163"/>
    </location>
</feature>
<feature type="domain" description="SSB" evidence="1">
    <location>
        <begin position="1"/>
        <end position="104"/>
    </location>
</feature>
<feature type="region of interest" description="Disordered" evidence="2">
    <location>
        <begin position="106"/>
        <end position="163"/>
    </location>
</feature>
<feature type="short sequence motif" description="Important for interaction with partner proteins" evidence="1">
    <location>
        <begin position="158"/>
        <end position="163"/>
    </location>
</feature>
<feature type="compositionally biased region" description="Low complexity" evidence="2">
    <location>
        <begin position="111"/>
        <end position="135"/>
    </location>
</feature>
<organism>
    <name type="scientific">Streptococcus agalactiae serotype V (strain ATCC BAA-611 / 2603 V/R)</name>
    <dbReference type="NCBI Taxonomy" id="208435"/>
    <lineage>
        <taxon>Bacteria</taxon>
        <taxon>Bacillati</taxon>
        <taxon>Bacillota</taxon>
        <taxon>Bacilli</taxon>
        <taxon>Lactobacillales</taxon>
        <taxon>Streptococcaceae</taxon>
        <taxon>Streptococcus</taxon>
    </lineage>
</organism>